<proteinExistence type="inferred from homology"/>
<reference key="1">
    <citation type="journal article" date="1997" name="Microbiology">
        <title>Analysis of the Bacillus subtilis genome: cloning and nucleotide sequence of a 62 kb region between 275 degrees (rrnB) and 284 degrees (pai).</title>
        <authorList>
            <person name="Oudega B."/>
            <person name="Koningstein G."/>
            <person name="Rodrigues L."/>
            <person name="de Sales Ramon M."/>
            <person name="Hilbert H."/>
            <person name="Duesterhoeft A."/>
            <person name="Pohl T.M."/>
            <person name="Weitzenegger T."/>
        </authorList>
    </citation>
    <scope>NUCLEOTIDE SEQUENCE [GENOMIC DNA]</scope>
    <source>
        <strain>168</strain>
    </source>
</reference>
<reference key="2">
    <citation type="journal article" date="1997" name="Nature">
        <title>The complete genome sequence of the Gram-positive bacterium Bacillus subtilis.</title>
        <authorList>
            <person name="Kunst F."/>
            <person name="Ogasawara N."/>
            <person name="Moszer I."/>
            <person name="Albertini A.M."/>
            <person name="Alloni G."/>
            <person name="Azevedo V."/>
            <person name="Bertero M.G."/>
            <person name="Bessieres P."/>
            <person name="Bolotin A."/>
            <person name="Borchert S."/>
            <person name="Borriss R."/>
            <person name="Boursier L."/>
            <person name="Brans A."/>
            <person name="Braun M."/>
            <person name="Brignell S.C."/>
            <person name="Bron S."/>
            <person name="Brouillet S."/>
            <person name="Bruschi C.V."/>
            <person name="Caldwell B."/>
            <person name="Capuano V."/>
            <person name="Carter N.M."/>
            <person name="Choi S.-K."/>
            <person name="Codani J.-J."/>
            <person name="Connerton I.F."/>
            <person name="Cummings N.J."/>
            <person name="Daniel R.A."/>
            <person name="Denizot F."/>
            <person name="Devine K.M."/>
            <person name="Duesterhoeft A."/>
            <person name="Ehrlich S.D."/>
            <person name="Emmerson P.T."/>
            <person name="Entian K.-D."/>
            <person name="Errington J."/>
            <person name="Fabret C."/>
            <person name="Ferrari E."/>
            <person name="Foulger D."/>
            <person name="Fritz C."/>
            <person name="Fujita M."/>
            <person name="Fujita Y."/>
            <person name="Fuma S."/>
            <person name="Galizzi A."/>
            <person name="Galleron N."/>
            <person name="Ghim S.-Y."/>
            <person name="Glaser P."/>
            <person name="Goffeau A."/>
            <person name="Golightly E.J."/>
            <person name="Grandi G."/>
            <person name="Guiseppi G."/>
            <person name="Guy B.J."/>
            <person name="Haga K."/>
            <person name="Haiech J."/>
            <person name="Harwood C.R."/>
            <person name="Henaut A."/>
            <person name="Hilbert H."/>
            <person name="Holsappel S."/>
            <person name="Hosono S."/>
            <person name="Hullo M.-F."/>
            <person name="Itaya M."/>
            <person name="Jones L.-M."/>
            <person name="Joris B."/>
            <person name="Karamata D."/>
            <person name="Kasahara Y."/>
            <person name="Klaerr-Blanchard M."/>
            <person name="Klein C."/>
            <person name="Kobayashi Y."/>
            <person name="Koetter P."/>
            <person name="Koningstein G."/>
            <person name="Krogh S."/>
            <person name="Kumano M."/>
            <person name="Kurita K."/>
            <person name="Lapidus A."/>
            <person name="Lardinois S."/>
            <person name="Lauber J."/>
            <person name="Lazarevic V."/>
            <person name="Lee S.-M."/>
            <person name="Levine A."/>
            <person name="Liu H."/>
            <person name="Masuda S."/>
            <person name="Mauel C."/>
            <person name="Medigue C."/>
            <person name="Medina N."/>
            <person name="Mellado R.P."/>
            <person name="Mizuno M."/>
            <person name="Moestl D."/>
            <person name="Nakai S."/>
            <person name="Noback M."/>
            <person name="Noone D."/>
            <person name="O'Reilly M."/>
            <person name="Ogawa K."/>
            <person name="Ogiwara A."/>
            <person name="Oudega B."/>
            <person name="Park S.-H."/>
            <person name="Parro V."/>
            <person name="Pohl T.M."/>
            <person name="Portetelle D."/>
            <person name="Porwollik S."/>
            <person name="Prescott A.M."/>
            <person name="Presecan E."/>
            <person name="Pujic P."/>
            <person name="Purnelle B."/>
            <person name="Rapoport G."/>
            <person name="Rey M."/>
            <person name="Reynolds S."/>
            <person name="Rieger M."/>
            <person name="Rivolta C."/>
            <person name="Rocha E."/>
            <person name="Roche B."/>
            <person name="Rose M."/>
            <person name="Sadaie Y."/>
            <person name="Sato T."/>
            <person name="Scanlan E."/>
            <person name="Schleich S."/>
            <person name="Schroeter R."/>
            <person name="Scoffone F."/>
            <person name="Sekiguchi J."/>
            <person name="Sekowska A."/>
            <person name="Seror S.J."/>
            <person name="Serror P."/>
            <person name="Shin B.-S."/>
            <person name="Soldo B."/>
            <person name="Sorokin A."/>
            <person name="Tacconi E."/>
            <person name="Takagi T."/>
            <person name="Takahashi H."/>
            <person name="Takemaru K."/>
            <person name="Takeuchi M."/>
            <person name="Tamakoshi A."/>
            <person name="Tanaka T."/>
            <person name="Terpstra P."/>
            <person name="Tognoni A."/>
            <person name="Tosato V."/>
            <person name="Uchiyama S."/>
            <person name="Vandenbol M."/>
            <person name="Vannier F."/>
            <person name="Vassarotti A."/>
            <person name="Viari A."/>
            <person name="Wambutt R."/>
            <person name="Wedler E."/>
            <person name="Wedler H."/>
            <person name="Weitzenegger T."/>
            <person name="Winters P."/>
            <person name="Wipat A."/>
            <person name="Yamamoto H."/>
            <person name="Yamane K."/>
            <person name="Yasumoto K."/>
            <person name="Yata K."/>
            <person name="Yoshida K."/>
            <person name="Yoshikawa H.-F."/>
            <person name="Zumstein E."/>
            <person name="Yoshikawa H."/>
            <person name="Danchin A."/>
        </authorList>
    </citation>
    <scope>NUCLEOTIDE SEQUENCE [LARGE SCALE GENOMIC DNA]</scope>
    <source>
        <strain>168</strain>
    </source>
</reference>
<keyword id="KW-0119">Carbohydrate metabolism</keyword>
<keyword id="KW-0963">Cytoplasm</keyword>
<keyword id="KW-0413">Isomerase</keyword>
<keyword id="KW-1185">Reference proteome</keyword>
<keyword id="KW-0684">Rhamnose metabolism</keyword>
<organism>
    <name type="scientific">Bacillus subtilis (strain 168)</name>
    <dbReference type="NCBI Taxonomy" id="224308"/>
    <lineage>
        <taxon>Bacteria</taxon>
        <taxon>Bacillati</taxon>
        <taxon>Bacillota</taxon>
        <taxon>Bacilli</taxon>
        <taxon>Bacillales</taxon>
        <taxon>Bacillaceae</taxon>
        <taxon>Bacillus</taxon>
    </lineage>
</organism>
<feature type="chain" id="PRO_0000344552" description="L-rhamnose mutarotase">
    <location>
        <begin position="1"/>
        <end position="104"/>
    </location>
</feature>
<feature type="active site" description="Proton donor" evidence="1">
    <location>
        <position position="22"/>
    </location>
</feature>
<feature type="binding site" evidence="1">
    <location>
        <position position="18"/>
    </location>
    <ligand>
        <name>substrate</name>
    </ligand>
</feature>
<feature type="binding site" evidence="1">
    <location>
        <position position="41"/>
    </location>
    <ligand>
        <name>substrate</name>
    </ligand>
</feature>
<feature type="binding site" evidence="1">
    <location>
        <begin position="76"/>
        <end position="77"/>
    </location>
    <ligand>
        <name>substrate</name>
    </ligand>
</feature>
<name>RHAM_BACSU</name>
<evidence type="ECO:0000255" key="1">
    <source>
        <dbReference type="HAMAP-Rule" id="MF_01663"/>
    </source>
</evidence>
<sequence>MKRKASIMFVHQDKYEEYKQRHDDIWPEMAEALKAHGAHHYSIFLDEETGRLFAYLEIEDEEKWRKMADTEVCQRWWKSMAPLMKTNSDFSPVAIDLKEVFYLD</sequence>
<accession>O05263</accession>
<accession>Q795N2</accession>
<comment type="function">
    <text evidence="1">Involved in the anomeric conversion of L-rhamnose.</text>
</comment>
<comment type="catalytic activity">
    <reaction evidence="1">
        <text>alpha-L-rhamnose = beta-L-rhamnose</text>
        <dbReference type="Rhea" id="RHEA:25584"/>
        <dbReference type="ChEBI" id="CHEBI:27586"/>
        <dbReference type="ChEBI" id="CHEBI:27907"/>
        <dbReference type="EC" id="5.1.3.32"/>
    </reaction>
</comment>
<comment type="pathway">
    <text evidence="1">Carbohydrate metabolism; L-rhamnose metabolism.</text>
</comment>
<comment type="subunit">
    <text evidence="1">Homodimer.</text>
</comment>
<comment type="subcellular location">
    <subcellularLocation>
        <location evidence="1">Cytoplasm</location>
    </subcellularLocation>
</comment>
<comment type="similarity">
    <text evidence="1">Belongs to the rhamnose mutarotase family.</text>
</comment>
<dbReference type="EC" id="5.1.3.32" evidence="1"/>
<dbReference type="EMBL" id="Z93938">
    <property type="protein sequence ID" value="CAB07950.1"/>
    <property type="molecule type" value="Genomic_DNA"/>
</dbReference>
<dbReference type="EMBL" id="AL009126">
    <property type="protein sequence ID" value="CAB15097.1"/>
    <property type="molecule type" value="Genomic_DNA"/>
</dbReference>
<dbReference type="PIR" id="F70014">
    <property type="entry name" value="F70014"/>
</dbReference>
<dbReference type="RefSeq" id="NP_390997.1">
    <property type="nucleotide sequence ID" value="NC_000964.3"/>
</dbReference>
<dbReference type="RefSeq" id="WP_003243762.1">
    <property type="nucleotide sequence ID" value="NZ_OZ025638.1"/>
</dbReference>
<dbReference type="SMR" id="O05263"/>
<dbReference type="FunCoup" id="O05263">
    <property type="interactions" value="130"/>
</dbReference>
<dbReference type="STRING" id="224308.BSU31190"/>
<dbReference type="PaxDb" id="224308-BSU31190"/>
<dbReference type="EnsemblBacteria" id="CAB15097">
    <property type="protein sequence ID" value="CAB15097"/>
    <property type="gene ID" value="BSU_31190"/>
</dbReference>
<dbReference type="GeneID" id="937151"/>
<dbReference type="KEGG" id="bsu:BSU31190"/>
<dbReference type="PATRIC" id="fig|224308.179.peg.3379"/>
<dbReference type="eggNOG" id="COG3254">
    <property type="taxonomic scope" value="Bacteria"/>
</dbReference>
<dbReference type="InParanoid" id="O05263"/>
<dbReference type="OrthoDB" id="9799608at2"/>
<dbReference type="PhylomeDB" id="O05263"/>
<dbReference type="BioCyc" id="BSUB:BSU31190-MONOMER"/>
<dbReference type="UniPathway" id="UPA00125"/>
<dbReference type="Proteomes" id="UP000001570">
    <property type="component" value="Chromosome"/>
</dbReference>
<dbReference type="GO" id="GO:0005737">
    <property type="term" value="C:cytoplasm"/>
    <property type="evidence" value="ECO:0007669"/>
    <property type="project" value="UniProtKB-SubCell"/>
</dbReference>
<dbReference type="GO" id="GO:0062192">
    <property type="term" value="F:L-rhamnose mutarotase activity"/>
    <property type="evidence" value="ECO:0007669"/>
    <property type="project" value="UniProtKB-EC"/>
</dbReference>
<dbReference type="GO" id="GO:0016857">
    <property type="term" value="F:racemase and epimerase activity, acting on carbohydrates and derivatives"/>
    <property type="evidence" value="ECO:0000318"/>
    <property type="project" value="GO_Central"/>
</dbReference>
<dbReference type="GO" id="GO:0019301">
    <property type="term" value="P:rhamnose catabolic process"/>
    <property type="evidence" value="ECO:0000318"/>
    <property type="project" value="GO_Central"/>
</dbReference>
<dbReference type="Gene3D" id="3.30.70.100">
    <property type="match status" value="1"/>
</dbReference>
<dbReference type="HAMAP" id="MF_01663">
    <property type="entry name" value="L_rham_rotase"/>
    <property type="match status" value="1"/>
</dbReference>
<dbReference type="InterPro" id="IPR011008">
    <property type="entry name" value="Dimeric_a/b-barrel"/>
</dbReference>
<dbReference type="InterPro" id="IPR013448">
    <property type="entry name" value="L-rhamnose_mutarotase"/>
</dbReference>
<dbReference type="InterPro" id="IPR008000">
    <property type="entry name" value="Rham/fucose_mutarotase"/>
</dbReference>
<dbReference type="NCBIfam" id="TIGR02625">
    <property type="entry name" value="YiiL_rotase"/>
    <property type="match status" value="1"/>
</dbReference>
<dbReference type="PANTHER" id="PTHR34389">
    <property type="entry name" value="L-RHAMNOSE MUTAROTASE"/>
    <property type="match status" value="1"/>
</dbReference>
<dbReference type="PANTHER" id="PTHR34389:SF2">
    <property type="entry name" value="L-RHAMNOSE MUTAROTASE"/>
    <property type="match status" value="1"/>
</dbReference>
<dbReference type="Pfam" id="PF05336">
    <property type="entry name" value="rhaM"/>
    <property type="match status" value="1"/>
</dbReference>
<dbReference type="SUPFAM" id="SSF54909">
    <property type="entry name" value="Dimeric alpha+beta barrel"/>
    <property type="match status" value="1"/>
</dbReference>
<gene>
    <name evidence="1" type="primary">rhaM</name>
    <name type="synonym">yulD</name>
    <name type="ordered locus">BSU31190</name>
</gene>
<protein>
    <recommendedName>
        <fullName evidence="1">L-rhamnose mutarotase</fullName>
        <ecNumber evidence="1">5.1.3.32</ecNumber>
    </recommendedName>
    <alternativeName>
        <fullName evidence="1">Rhamnose 1-epimerase</fullName>
    </alternativeName>
    <alternativeName>
        <fullName evidence="1">Type-3 mutarotase</fullName>
    </alternativeName>
</protein>